<protein>
    <recommendedName>
        <fullName>Uncharacterized protein C03B1.3</fullName>
    </recommendedName>
</protein>
<feature type="chain" id="PRO_0000065118" description="Uncharacterized protein C03B1.3">
    <location>
        <begin position="1"/>
        <end position="115"/>
    </location>
</feature>
<organism>
    <name type="scientific">Caenorhabditis elegans</name>
    <dbReference type="NCBI Taxonomy" id="6239"/>
    <lineage>
        <taxon>Eukaryota</taxon>
        <taxon>Metazoa</taxon>
        <taxon>Ecdysozoa</taxon>
        <taxon>Nematoda</taxon>
        <taxon>Chromadorea</taxon>
        <taxon>Rhabditida</taxon>
        <taxon>Rhabditina</taxon>
        <taxon>Rhabditomorpha</taxon>
        <taxon>Rhabditoidea</taxon>
        <taxon>Rhabditidae</taxon>
        <taxon>Peloderinae</taxon>
        <taxon>Caenorhabditis</taxon>
    </lineage>
</organism>
<keyword id="KW-1185">Reference proteome</keyword>
<accession>Q11110</accession>
<sequence>MPPIIPLNLTLSHILGRIQRKYPNATIDAQRISAHMGEFRVLECYFNMTRVAIRAITYPQDENGKESCASGEVHYHWACFCGVSPNLQVYIIHYKPSGNNVQQKKKNNENLAVRK</sequence>
<proteinExistence type="predicted"/>
<reference key="1">
    <citation type="journal article" date="1998" name="Science">
        <title>Genome sequence of the nematode C. elegans: a platform for investigating biology.</title>
        <authorList>
            <consortium name="The C. elegans sequencing consortium"/>
        </authorList>
    </citation>
    <scope>NUCLEOTIDE SEQUENCE [LARGE SCALE GENOMIC DNA]</scope>
    <source>
        <strain>Bristol N2</strain>
    </source>
</reference>
<dbReference type="EMBL" id="FO080304">
    <property type="protein sequence ID" value="CCD62739.1"/>
    <property type="molecule type" value="Genomic_DNA"/>
</dbReference>
<dbReference type="PIR" id="T15386">
    <property type="entry name" value="T15386"/>
</dbReference>
<dbReference type="RefSeq" id="NP_509069.1">
    <property type="nucleotide sequence ID" value="NM_076668.5"/>
</dbReference>
<dbReference type="FunCoup" id="Q11110">
    <property type="interactions" value="1"/>
</dbReference>
<dbReference type="PaxDb" id="6239-C03B1.3"/>
<dbReference type="EnsemblMetazoa" id="C03B1.3.1">
    <property type="protein sequence ID" value="C03B1.3.1"/>
    <property type="gene ID" value="WBGene00015374"/>
</dbReference>
<dbReference type="GeneID" id="182146"/>
<dbReference type="KEGG" id="cel:CELE_C03B1.3"/>
<dbReference type="UCSC" id="C03B1.3">
    <property type="organism name" value="c. elegans"/>
</dbReference>
<dbReference type="AGR" id="WB:WBGene00015374"/>
<dbReference type="CTD" id="182146"/>
<dbReference type="WormBase" id="C03B1.3">
    <property type="protein sequence ID" value="CE03905"/>
    <property type="gene ID" value="WBGene00015374"/>
</dbReference>
<dbReference type="HOGENOM" id="CLU_2111101_0_0_1"/>
<dbReference type="InParanoid" id="Q11110"/>
<dbReference type="PRO" id="PR:Q11110"/>
<dbReference type="Proteomes" id="UP000001940">
    <property type="component" value="Chromosome X"/>
</dbReference>
<gene>
    <name type="ORF">C03B1.3</name>
</gene>
<name>YX03_CAEEL</name>